<organism>
    <name type="scientific">Dictyoglomus turgidum (strain DSM 6724 / Z-1310)</name>
    <dbReference type="NCBI Taxonomy" id="515635"/>
    <lineage>
        <taxon>Bacteria</taxon>
        <taxon>Pseudomonadati</taxon>
        <taxon>Dictyoglomota</taxon>
        <taxon>Dictyoglomia</taxon>
        <taxon>Dictyoglomales</taxon>
        <taxon>Dictyoglomaceae</taxon>
        <taxon>Dictyoglomus</taxon>
    </lineage>
</organism>
<sequence>MRRFFGTDGIRGVVNEDLTPELAYKLSRAIVGYFGNVKGKKVIIGSDTRNSKDMLKSALVAGFTSGGMNVLDVGVISTPALSYLVKNQDEVLLGVMISASHNPVEYNGIKIFKNDGFKLDDDVEAEIENYLLKEDNYYRANPREIGVIYDFSHIKEKYKNYLREIINGNFEGYKVMLDCAFGSLSEIAPEVFRELGAEVVAYNTKYNGLNINENCGAVYPETSKKLFLNSGAHIGFTYDGDGDRVIAFSENGEIIDGDIMLGILAKYLKEKGLLKGDKIVGTIMTNLGLEEYLKNINVELIRTKVGDRYVLDEILKYGLNLGGETSGHIILFDYMSTGDGLLTSLFLLKILKEKGVKLSELAKDIKIFPQVHEKVSVKGLNITEDMEKRFIEITEEVINGKNIRYIVRKSGTEPVVRITLEGDVPKEYLNELVLEIKSRIIDLLSNF</sequence>
<accession>B8E222</accession>
<proteinExistence type="inferred from homology"/>
<evidence type="ECO:0000255" key="1">
    <source>
        <dbReference type="HAMAP-Rule" id="MF_01554"/>
    </source>
</evidence>
<keyword id="KW-0413">Isomerase</keyword>
<keyword id="KW-0460">Magnesium</keyword>
<keyword id="KW-0479">Metal-binding</keyword>
<keyword id="KW-0597">Phosphoprotein</keyword>
<keyword id="KW-1185">Reference proteome</keyword>
<protein>
    <recommendedName>
        <fullName evidence="1">Phosphoglucosamine mutase</fullName>
        <ecNumber evidence="1">5.4.2.10</ecNumber>
    </recommendedName>
</protein>
<feature type="chain" id="PRO_1000201088" description="Phosphoglucosamine mutase">
    <location>
        <begin position="1"/>
        <end position="447"/>
    </location>
</feature>
<feature type="active site" description="Phosphoserine intermediate" evidence="1">
    <location>
        <position position="100"/>
    </location>
</feature>
<feature type="binding site" description="via phosphate group" evidence="1">
    <location>
        <position position="100"/>
    </location>
    <ligand>
        <name>Mg(2+)</name>
        <dbReference type="ChEBI" id="CHEBI:18420"/>
    </ligand>
</feature>
<feature type="binding site" evidence="1">
    <location>
        <position position="239"/>
    </location>
    <ligand>
        <name>Mg(2+)</name>
        <dbReference type="ChEBI" id="CHEBI:18420"/>
    </ligand>
</feature>
<feature type="binding site" evidence="1">
    <location>
        <position position="241"/>
    </location>
    <ligand>
        <name>Mg(2+)</name>
        <dbReference type="ChEBI" id="CHEBI:18420"/>
    </ligand>
</feature>
<feature type="binding site" evidence="1">
    <location>
        <position position="243"/>
    </location>
    <ligand>
        <name>Mg(2+)</name>
        <dbReference type="ChEBI" id="CHEBI:18420"/>
    </ligand>
</feature>
<feature type="modified residue" description="Phosphoserine" evidence="1">
    <location>
        <position position="100"/>
    </location>
</feature>
<reference key="1">
    <citation type="journal article" date="2016" name="Front. Microbiol.">
        <title>The complete genome sequence of hyperthermophile Dictyoglomus turgidum DSM 6724 reveals a specialized carbohydrate fermentor.</title>
        <authorList>
            <person name="Brumm P.J."/>
            <person name="Gowda K."/>
            <person name="Robb F.T."/>
            <person name="Mead D.A."/>
        </authorList>
    </citation>
    <scope>NUCLEOTIDE SEQUENCE [LARGE SCALE GENOMIC DNA]</scope>
    <source>
        <strain>DSM 6724 / Z-1310</strain>
    </source>
</reference>
<comment type="function">
    <text evidence="1">Catalyzes the conversion of glucosamine-6-phosphate to glucosamine-1-phosphate.</text>
</comment>
<comment type="catalytic activity">
    <reaction evidence="1">
        <text>alpha-D-glucosamine 1-phosphate = D-glucosamine 6-phosphate</text>
        <dbReference type="Rhea" id="RHEA:23424"/>
        <dbReference type="ChEBI" id="CHEBI:58516"/>
        <dbReference type="ChEBI" id="CHEBI:58725"/>
        <dbReference type="EC" id="5.4.2.10"/>
    </reaction>
</comment>
<comment type="cofactor">
    <cofactor evidence="1">
        <name>Mg(2+)</name>
        <dbReference type="ChEBI" id="CHEBI:18420"/>
    </cofactor>
    <text evidence="1">Binds 1 Mg(2+) ion per subunit.</text>
</comment>
<comment type="PTM">
    <text evidence="1">Activated by phosphorylation.</text>
</comment>
<comment type="similarity">
    <text evidence="1">Belongs to the phosphohexose mutase family.</text>
</comment>
<dbReference type="EC" id="5.4.2.10" evidence="1"/>
<dbReference type="EMBL" id="CP001251">
    <property type="protein sequence ID" value="ACK42299.1"/>
    <property type="molecule type" value="Genomic_DNA"/>
</dbReference>
<dbReference type="RefSeq" id="WP_012583382.1">
    <property type="nucleotide sequence ID" value="NC_011661.1"/>
</dbReference>
<dbReference type="RefSeq" id="YP_002352913.1">
    <property type="nucleotide sequence ID" value="NC_011661.1"/>
</dbReference>
<dbReference type="SMR" id="B8E222"/>
<dbReference type="FunCoup" id="B8E222">
    <property type="interactions" value="374"/>
</dbReference>
<dbReference type="STRING" id="515635.Dtur_1019"/>
<dbReference type="EnsemblBacteria" id="ACK42299">
    <property type="protein sequence ID" value="ACK42299"/>
    <property type="gene ID" value="Dtur_1019"/>
</dbReference>
<dbReference type="KEGG" id="dtu:Dtur_1019"/>
<dbReference type="PATRIC" id="fig|515635.4.peg.1056"/>
<dbReference type="eggNOG" id="COG1109">
    <property type="taxonomic scope" value="Bacteria"/>
</dbReference>
<dbReference type="HOGENOM" id="CLU_016950_7_0_0"/>
<dbReference type="InParanoid" id="B8E222"/>
<dbReference type="OrthoDB" id="9806956at2"/>
<dbReference type="Proteomes" id="UP000007719">
    <property type="component" value="Chromosome"/>
</dbReference>
<dbReference type="GO" id="GO:0005829">
    <property type="term" value="C:cytosol"/>
    <property type="evidence" value="ECO:0000318"/>
    <property type="project" value="GO_Central"/>
</dbReference>
<dbReference type="GO" id="GO:0000287">
    <property type="term" value="F:magnesium ion binding"/>
    <property type="evidence" value="ECO:0007669"/>
    <property type="project" value="UniProtKB-UniRule"/>
</dbReference>
<dbReference type="GO" id="GO:0008966">
    <property type="term" value="F:phosphoglucosamine mutase activity"/>
    <property type="evidence" value="ECO:0000318"/>
    <property type="project" value="GO_Central"/>
</dbReference>
<dbReference type="GO" id="GO:0004615">
    <property type="term" value="F:phosphomannomutase activity"/>
    <property type="evidence" value="ECO:0000318"/>
    <property type="project" value="GO_Central"/>
</dbReference>
<dbReference type="GO" id="GO:0005975">
    <property type="term" value="P:carbohydrate metabolic process"/>
    <property type="evidence" value="ECO:0007669"/>
    <property type="project" value="InterPro"/>
</dbReference>
<dbReference type="GO" id="GO:0009252">
    <property type="term" value="P:peptidoglycan biosynthetic process"/>
    <property type="evidence" value="ECO:0000318"/>
    <property type="project" value="GO_Central"/>
</dbReference>
<dbReference type="GO" id="GO:0006048">
    <property type="term" value="P:UDP-N-acetylglucosamine biosynthetic process"/>
    <property type="evidence" value="ECO:0000318"/>
    <property type="project" value="GO_Central"/>
</dbReference>
<dbReference type="CDD" id="cd05802">
    <property type="entry name" value="GlmM"/>
    <property type="match status" value="1"/>
</dbReference>
<dbReference type="FunFam" id="3.40.120.10:FF:000001">
    <property type="entry name" value="Phosphoglucosamine mutase"/>
    <property type="match status" value="1"/>
</dbReference>
<dbReference type="FunFam" id="3.40.120.10:FF:000002">
    <property type="entry name" value="Phosphoglucosamine mutase"/>
    <property type="match status" value="1"/>
</dbReference>
<dbReference type="Gene3D" id="3.40.120.10">
    <property type="entry name" value="Alpha-D-Glucose-1,6-Bisphosphate, subunit A, domain 3"/>
    <property type="match status" value="3"/>
</dbReference>
<dbReference type="Gene3D" id="3.30.310.50">
    <property type="entry name" value="Alpha-D-phosphohexomutase, C-terminal domain"/>
    <property type="match status" value="1"/>
</dbReference>
<dbReference type="HAMAP" id="MF_01554_B">
    <property type="entry name" value="GlmM_B"/>
    <property type="match status" value="1"/>
</dbReference>
<dbReference type="InterPro" id="IPR005844">
    <property type="entry name" value="A-D-PHexomutase_a/b/a-I"/>
</dbReference>
<dbReference type="InterPro" id="IPR016055">
    <property type="entry name" value="A-D-PHexomutase_a/b/a-I/II/III"/>
</dbReference>
<dbReference type="InterPro" id="IPR005845">
    <property type="entry name" value="A-D-PHexomutase_a/b/a-II"/>
</dbReference>
<dbReference type="InterPro" id="IPR005846">
    <property type="entry name" value="A-D-PHexomutase_a/b/a-III"/>
</dbReference>
<dbReference type="InterPro" id="IPR005843">
    <property type="entry name" value="A-D-PHexomutase_C"/>
</dbReference>
<dbReference type="InterPro" id="IPR036900">
    <property type="entry name" value="A-D-PHexomutase_C_sf"/>
</dbReference>
<dbReference type="InterPro" id="IPR016066">
    <property type="entry name" value="A-D-PHexomutase_CS"/>
</dbReference>
<dbReference type="InterPro" id="IPR005841">
    <property type="entry name" value="Alpha-D-phosphohexomutase_SF"/>
</dbReference>
<dbReference type="InterPro" id="IPR006352">
    <property type="entry name" value="GlmM_bact"/>
</dbReference>
<dbReference type="InterPro" id="IPR050060">
    <property type="entry name" value="Phosphoglucosamine_mutase"/>
</dbReference>
<dbReference type="NCBIfam" id="TIGR01455">
    <property type="entry name" value="glmM"/>
    <property type="match status" value="1"/>
</dbReference>
<dbReference type="PANTHER" id="PTHR42946:SF1">
    <property type="entry name" value="PHOSPHOGLUCOMUTASE (ALPHA-D-GLUCOSE-1,6-BISPHOSPHATE-DEPENDENT)"/>
    <property type="match status" value="1"/>
</dbReference>
<dbReference type="PANTHER" id="PTHR42946">
    <property type="entry name" value="PHOSPHOHEXOSE MUTASE"/>
    <property type="match status" value="1"/>
</dbReference>
<dbReference type="Pfam" id="PF02878">
    <property type="entry name" value="PGM_PMM_I"/>
    <property type="match status" value="1"/>
</dbReference>
<dbReference type="Pfam" id="PF02879">
    <property type="entry name" value="PGM_PMM_II"/>
    <property type="match status" value="1"/>
</dbReference>
<dbReference type="Pfam" id="PF02880">
    <property type="entry name" value="PGM_PMM_III"/>
    <property type="match status" value="1"/>
</dbReference>
<dbReference type="Pfam" id="PF00408">
    <property type="entry name" value="PGM_PMM_IV"/>
    <property type="match status" value="1"/>
</dbReference>
<dbReference type="PRINTS" id="PR00509">
    <property type="entry name" value="PGMPMM"/>
</dbReference>
<dbReference type="SUPFAM" id="SSF55957">
    <property type="entry name" value="Phosphoglucomutase, C-terminal domain"/>
    <property type="match status" value="1"/>
</dbReference>
<dbReference type="SUPFAM" id="SSF53738">
    <property type="entry name" value="Phosphoglucomutase, first 3 domains"/>
    <property type="match status" value="3"/>
</dbReference>
<dbReference type="PROSITE" id="PS00710">
    <property type="entry name" value="PGM_PMM"/>
    <property type="match status" value="1"/>
</dbReference>
<gene>
    <name evidence="1" type="primary">glmM</name>
    <name type="ordered locus">Dtur_1019</name>
</gene>
<name>GLMM_DICTD</name>